<reference key="1">
    <citation type="journal article" date="2009" name="PLoS Pathog.">
        <title>Genomic evidence for the evolution of Streptococcus equi: host restriction, increased virulence, and genetic exchange with human pathogens.</title>
        <authorList>
            <person name="Holden M.T.G."/>
            <person name="Heather Z."/>
            <person name="Paillot R."/>
            <person name="Steward K.F."/>
            <person name="Webb K."/>
            <person name="Ainslie F."/>
            <person name="Jourdan T."/>
            <person name="Bason N.C."/>
            <person name="Holroyd N.E."/>
            <person name="Mungall K."/>
            <person name="Quail M.A."/>
            <person name="Sanders M."/>
            <person name="Simmonds M."/>
            <person name="Willey D."/>
            <person name="Brooks K."/>
            <person name="Aanensen D.M."/>
            <person name="Spratt B.G."/>
            <person name="Jolley K.A."/>
            <person name="Maiden M.C.J."/>
            <person name="Kehoe M."/>
            <person name="Chanter N."/>
            <person name="Bentley S.D."/>
            <person name="Robinson C."/>
            <person name="Maskell D.J."/>
            <person name="Parkhill J."/>
            <person name="Waller A.S."/>
        </authorList>
    </citation>
    <scope>NUCLEOTIDE SEQUENCE [LARGE SCALE GENOMIC DNA]</scope>
    <source>
        <strain>H70</strain>
    </source>
</reference>
<protein>
    <recommendedName>
        <fullName evidence="1">Probable DNA-directed RNA polymerase subunit delta</fullName>
    </recommendedName>
    <alternativeName>
        <fullName evidence="1">RNAP delta factor</fullName>
    </alternativeName>
</protein>
<keyword id="KW-0240">DNA-directed RNA polymerase</keyword>
<keyword id="KW-0548">Nucleotidyltransferase</keyword>
<keyword id="KW-0804">Transcription</keyword>
<keyword id="KW-0808">Transferase</keyword>
<gene>
    <name evidence="1" type="primary">rpoE</name>
    <name type="ordered locus">SZO_02520</name>
</gene>
<proteinExistence type="inferred from homology"/>
<evidence type="ECO:0000255" key="1">
    <source>
        <dbReference type="HAMAP-Rule" id="MF_00357"/>
    </source>
</evidence>
<evidence type="ECO:0000255" key="2">
    <source>
        <dbReference type="PROSITE-ProRule" id="PRU01261"/>
    </source>
</evidence>
<evidence type="ECO:0000256" key="3">
    <source>
        <dbReference type="SAM" id="MobiDB-lite"/>
    </source>
</evidence>
<accession>C0MFQ8</accession>
<feature type="chain" id="PRO_1000205360" description="Probable DNA-directed RNA polymerase subunit delta">
    <location>
        <begin position="1"/>
        <end position="188"/>
    </location>
</feature>
<feature type="domain" description="HTH HARE-type" evidence="2">
    <location>
        <begin position="14"/>
        <end position="83"/>
    </location>
</feature>
<feature type="region of interest" description="Disordered" evidence="3">
    <location>
        <begin position="119"/>
        <end position="188"/>
    </location>
</feature>
<comment type="function">
    <text evidence="1">Participates in both the initiation and recycling phases of transcription. In the presence of the delta subunit, RNAP displays an increased specificity of transcription, a decreased affinity for nucleic acids, and an increased efficiency of RNA synthesis because of enhanced recycling.</text>
</comment>
<comment type="subunit">
    <text evidence="1">RNAP is composed of a core of 2 alpha, a beta and a beta' subunits. The core is associated with a delta subunit and one of several sigma factors.</text>
</comment>
<comment type="similarity">
    <text evidence="1">Belongs to the RpoE family.</text>
</comment>
<name>RPOE_STRS7</name>
<sequence>MKLDVFAGQEISELSMIEVARAILEERGRDNDMYFSDLVNEIQNYLGKSDADIRYALPFFYTDLNTDGSFIPLGENKWGLRSWYAIDEIDEEIITLEDEEDGAPKRKKKRVNAFMDGDEDAIDYSADDPEDEDFVRESSDIEYDEEDPDDEKSEVESYDSELNEIIPEDDFEEVDLNEEDEEDEDEEE</sequence>
<organism>
    <name type="scientific">Streptococcus equi subsp. zooepidemicus (strain H70)</name>
    <dbReference type="NCBI Taxonomy" id="553483"/>
    <lineage>
        <taxon>Bacteria</taxon>
        <taxon>Bacillati</taxon>
        <taxon>Bacillota</taxon>
        <taxon>Bacilli</taxon>
        <taxon>Lactobacillales</taxon>
        <taxon>Streptococcaceae</taxon>
        <taxon>Streptococcus</taxon>
    </lineage>
</organism>
<dbReference type="EMBL" id="FM204884">
    <property type="protein sequence ID" value="CAW98014.1"/>
    <property type="molecule type" value="Genomic_DNA"/>
</dbReference>
<dbReference type="RefSeq" id="WP_012677368.1">
    <property type="nucleotide sequence ID" value="NZ_CP065054.1"/>
</dbReference>
<dbReference type="SMR" id="C0MFQ8"/>
<dbReference type="GeneID" id="83705586"/>
<dbReference type="KEGG" id="seq:SZO_02520"/>
<dbReference type="PATRIC" id="fig|40041.11.peg.274"/>
<dbReference type="eggNOG" id="COG3343">
    <property type="taxonomic scope" value="Bacteria"/>
</dbReference>
<dbReference type="HOGENOM" id="CLU_116648_0_0_9"/>
<dbReference type="Proteomes" id="UP000001368">
    <property type="component" value="Chromosome"/>
</dbReference>
<dbReference type="GO" id="GO:0000428">
    <property type="term" value="C:DNA-directed RNA polymerase complex"/>
    <property type="evidence" value="ECO:0007669"/>
    <property type="project" value="UniProtKB-KW"/>
</dbReference>
<dbReference type="GO" id="GO:0003899">
    <property type="term" value="F:DNA-directed RNA polymerase activity"/>
    <property type="evidence" value="ECO:0007669"/>
    <property type="project" value="UniProtKB-UniRule"/>
</dbReference>
<dbReference type="GO" id="GO:0006351">
    <property type="term" value="P:DNA-templated transcription"/>
    <property type="evidence" value="ECO:0007669"/>
    <property type="project" value="InterPro"/>
</dbReference>
<dbReference type="GO" id="GO:0006355">
    <property type="term" value="P:regulation of DNA-templated transcription"/>
    <property type="evidence" value="ECO:0007669"/>
    <property type="project" value="UniProtKB-UniRule"/>
</dbReference>
<dbReference type="Gene3D" id="1.10.10.1250">
    <property type="entry name" value="RNA polymerase, subunit delta, N-terminal domain"/>
    <property type="match status" value="1"/>
</dbReference>
<dbReference type="HAMAP" id="MF_00357">
    <property type="entry name" value="RNApol_bact_RpoE"/>
    <property type="match status" value="1"/>
</dbReference>
<dbReference type="InterPro" id="IPR007759">
    <property type="entry name" value="Asxl_HARE-HTH"/>
</dbReference>
<dbReference type="InterPro" id="IPR038087">
    <property type="entry name" value="RNAP_delta_N_dom_sf"/>
</dbReference>
<dbReference type="InterPro" id="IPR029757">
    <property type="entry name" value="RpoE"/>
</dbReference>
<dbReference type="NCBIfam" id="TIGR04567">
    <property type="entry name" value="RNAP_delt_lowGC"/>
    <property type="match status" value="1"/>
</dbReference>
<dbReference type="Pfam" id="PF05066">
    <property type="entry name" value="HARE-HTH"/>
    <property type="match status" value="1"/>
</dbReference>
<dbReference type="PROSITE" id="PS51913">
    <property type="entry name" value="HTH_HARE"/>
    <property type="match status" value="1"/>
</dbReference>